<gene>
    <name evidence="1" type="primary">uppP</name>
    <name type="ordered locus">Moth_0571</name>
</gene>
<name>UPPP_MOOTA</name>
<dbReference type="EC" id="3.6.1.27" evidence="1"/>
<dbReference type="EMBL" id="CP000232">
    <property type="protein sequence ID" value="ABC18901.1"/>
    <property type="molecule type" value="Genomic_DNA"/>
</dbReference>
<dbReference type="RefSeq" id="YP_429444.1">
    <property type="nucleotide sequence ID" value="NC_007644.1"/>
</dbReference>
<dbReference type="SMR" id="Q2RKY8"/>
<dbReference type="STRING" id="264732.Moth_0571"/>
<dbReference type="EnsemblBacteria" id="ABC18901">
    <property type="protein sequence ID" value="ABC18901"/>
    <property type="gene ID" value="Moth_0571"/>
</dbReference>
<dbReference type="KEGG" id="mta:Moth_0571"/>
<dbReference type="PATRIC" id="fig|264732.11.peg.614"/>
<dbReference type="eggNOG" id="COG1968">
    <property type="taxonomic scope" value="Bacteria"/>
</dbReference>
<dbReference type="HOGENOM" id="CLU_060296_1_0_9"/>
<dbReference type="OrthoDB" id="9808289at2"/>
<dbReference type="GO" id="GO:0005886">
    <property type="term" value="C:plasma membrane"/>
    <property type="evidence" value="ECO:0007669"/>
    <property type="project" value="UniProtKB-SubCell"/>
</dbReference>
<dbReference type="GO" id="GO:0050380">
    <property type="term" value="F:undecaprenyl-diphosphatase activity"/>
    <property type="evidence" value="ECO:0007669"/>
    <property type="project" value="UniProtKB-UniRule"/>
</dbReference>
<dbReference type="GO" id="GO:0071555">
    <property type="term" value="P:cell wall organization"/>
    <property type="evidence" value="ECO:0007669"/>
    <property type="project" value="UniProtKB-KW"/>
</dbReference>
<dbReference type="GO" id="GO:0009252">
    <property type="term" value="P:peptidoglycan biosynthetic process"/>
    <property type="evidence" value="ECO:0007669"/>
    <property type="project" value="UniProtKB-KW"/>
</dbReference>
<dbReference type="GO" id="GO:0008360">
    <property type="term" value="P:regulation of cell shape"/>
    <property type="evidence" value="ECO:0007669"/>
    <property type="project" value="UniProtKB-KW"/>
</dbReference>
<dbReference type="GO" id="GO:0046677">
    <property type="term" value="P:response to antibiotic"/>
    <property type="evidence" value="ECO:0007669"/>
    <property type="project" value="UniProtKB-UniRule"/>
</dbReference>
<dbReference type="HAMAP" id="MF_01006">
    <property type="entry name" value="Undec_diphosphatase"/>
    <property type="match status" value="1"/>
</dbReference>
<dbReference type="InterPro" id="IPR003824">
    <property type="entry name" value="UppP"/>
</dbReference>
<dbReference type="NCBIfam" id="TIGR00753">
    <property type="entry name" value="undec_PP_bacA"/>
    <property type="match status" value="1"/>
</dbReference>
<dbReference type="PANTHER" id="PTHR30622">
    <property type="entry name" value="UNDECAPRENYL-DIPHOSPHATASE"/>
    <property type="match status" value="1"/>
</dbReference>
<dbReference type="PANTHER" id="PTHR30622:SF4">
    <property type="entry name" value="UNDECAPRENYL-DIPHOSPHATASE"/>
    <property type="match status" value="1"/>
</dbReference>
<dbReference type="Pfam" id="PF02673">
    <property type="entry name" value="BacA"/>
    <property type="match status" value="1"/>
</dbReference>
<protein>
    <recommendedName>
        <fullName evidence="1">Undecaprenyl-diphosphatase</fullName>
        <ecNumber evidence="1">3.6.1.27</ecNumber>
    </recommendedName>
    <alternativeName>
        <fullName evidence="1">Bacitracin resistance protein</fullName>
    </alternativeName>
    <alternativeName>
        <fullName evidence="1">Undecaprenyl pyrophosphate phosphatase</fullName>
    </alternativeName>
</protein>
<organism>
    <name type="scientific">Moorella thermoacetica (strain ATCC 39073 / JCM 9320)</name>
    <dbReference type="NCBI Taxonomy" id="264732"/>
    <lineage>
        <taxon>Bacteria</taxon>
        <taxon>Bacillati</taxon>
        <taxon>Bacillota</taxon>
        <taxon>Clostridia</taxon>
        <taxon>Moorellales</taxon>
        <taxon>Moorellaceae</taxon>
        <taxon>Moorella</taxon>
    </lineage>
</organism>
<comment type="function">
    <text evidence="1">Catalyzes the dephosphorylation of undecaprenyl diphosphate (UPP). Confers resistance to bacitracin.</text>
</comment>
<comment type="catalytic activity">
    <reaction evidence="1">
        <text>di-trans,octa-cis-undecaprenyl diphosphate + H2O = di-trans,octa-cis-undecaprenyl phosphate + phosphate + H(+)</text>
        <dbReference type="Rhea" id="RHEA:28094"/>
        <dbReference type="ChEBI" id="CHEBI:15377"/>
        <dbReference type="ChEBI" id="CHEBI:15378"/>
        <dbReference type="ChEBI" id="CHEBI:43474"/>
        <dbReference type="ChEBI" id="CHEBI:58405"/>
        <dbReference type="ChEBI" id="CHEBI:60392"/>
        <dbReference type="EC" id="3.6.1.27"/>
    </reaction>
</comment>
<comment type="subcellular location">
    <subcellularLocation>
        <location evidence="1">Cell membrane</location>
        <topology evidence="1">Multi-pass membrane protein</topology>
    </subcellularLocation>
</comment>
<comment type="miscellaneous">
    <text>Bacitracin is thought to be involved in the inhibition of peptidoglycan synthesis by sequestering undecaprenyl diphosphate, thereby reducing the pool of lipid carrier available.</text>
</comment>
<comment type="similarity">
    <text evidence="1">Belongs to the UppP family.</text>
</comment>
<proteinExistence type="inferred from homology"/>
<reference key="1">
    <citation type="journal article" date="2008" name="Environ. Microbiol.">
        <title>The complete genome sequence of Moorella thermoacetica (f. Clostridium thermoaceticum).</title>
        <authorList>
            <person name="Pierce E."/>
            <person name="Xie G."/>
            <person name="Barabote R.D."/>
            <person name="Saunders E."/>
            <person name="Han C.S."/>
            <person name="Detter J.C."/>
            <person name="Richardson P."/>
            <person name="Brettin T.S."/>
            <person name="Das A."/>
            <person name="Ljungdahl L.G."/>
            <person name="Ragsdale S.W."/>
        </authorList>
    </citation>
    <scope>NUCLEOTIDE SEQUENCE [LARGE SCALE GENOMIC DNA]</scope>
    <source>
        <strain>ATCC 39073 / JCM 9320</strain>
    </source>
</reference>
<evidence type="ECO:0000255" key="1">
    <source>
        <dbReference type="HAMAP-Rule" id="MF_01006"/>
    </source>
</evidence>
<sequence>MTVLQAIVLGLVQGVGEFLPISSSAHLILTPWFFRWPDPGLTFDVALHLGTLIAVVAYFWRDIIELVLSGLGQPRSQDGRLFWYLIVASIPGAIFGVLFEKQAETIFRSPLLIALTLTLMGLGLWWADRVGRKRRQLDDVNLFDGIIVGISQALAIIPGVSRSGITMTAGLLTGMERETAARFSFLMSVPIIAGAALLKLKELPLHEVNLAFIAGVLTAAVVGFLAIKFLLQYLRRGSYLLFTGYRILLAALIVAVFWLRR</sequence>
<accession>Q2RKY8</accession>
<keyword id="KW-0046">Antibiotic resistance</keyword>
<keyword id="KW-1003">Cell membrane</keyword>
<keyword id="KW-0133">Cell shape</keyword>
<keyword id="KW-0961">Cell wall biogenesis/degradation</keyword>
<keyword id="KW-0378">Hydrolase</keyword>
<keyword id="KW-0472">Membrane</keyword>
<keyword id="KW-0573">Peptidoglycan synthesis</keyword>
<keyword id="KW-0812">Transmembrane</keyword>
<keyword id="KW-1133">Transmembrane helix</keyword>
<feature type="chain" id="PRO_0000250245" description="Undecaprenyl-diphosphatase">
    <location>
        <begin position="1"/>
        <end position="261"/>
    </location>
</feature>
<feature type="transmembrane region" description="Helical" evidence="1">
    <location>
        <begin position="1"/>
        <end position="21"/>
    </location>
</feature>
<feature type="transmembrane region" description="Helical" evidence="1">
    <location>
        <begin position="40"/>
        <end position="60"/>
    </location>
</feature>
<feature type="transmembrane region" description="Helical" evidence="1">
    <location>
        <begin position="79"/>
        <end position="99"/>
    </location>
</feature>
<feature type="transmembrane region" description="Helical" evidence="1">
    <location>
        <begin position="106"/>
        <end position="126"/>
    </location>
</feature>
<feature type="transmembrane region" description="Helical" evidence="1">
    <location>
        <begin position="140"/>
        <end position="160"/>
    </location>
</feature>
<feature type="transmembrane region" description="Helical" evidence="1">
    <location>
        <begin position="185"/>
        <end position="205"/>
    </location>
</feature>
<feature type="transmembrane region" description="Helical" evidence="1">
    <location>
        <begin position="210"/>
        <end position="230"/>
    </location>
</feature>
<feature type="transmembrane region" description="Helical" evidence="1">
    <location>
        <begin position="239"/>
        <end position="259"/>
    </location>
</feature>